<keyword id="KW-0150">Chloroplast</keyword>
<keyword id="KW-0472">Membrane</keyword>
<keyword id="KW-0602">Photosynthesis</keyword>
<keyword id="KW-0604">Photosystem II</keyword>
<keyword id="KW-0934">Plastid</keyword>
<keyword id="KW-0674">Reaction center</keyword>
<keyword id="KW-0691">RNA editing</keyword>
<keyword id="KW-0793">Thylakoid</keyword>
<keyword id="KW-0812">Transmembrane</keyword>
<keyword id="KW-1133">Transmembrane helix</keyword>
<feature type="chain" id="PRO_0000219689" description="Photosystem II reaction center protein L">
    <location>
        <begin position="1"/>
        <end position="38"/>
    </location>
</feature>
<feature type="transmembrane region" description="Helical" evidence="2">
    <location>
        <begin position="17"/>
        <end position="37"/>
    </location>
</feature>
<proteinExistence type="inferred from homology"/>
<organism>
    <name type="scientific">Calycanthus floridus</name>
    <name type="common">Eastern sweetshrub</name>
    <dbReference type="NCBI Taxonomy" id="3429"/>
    <lineage>
        <taxon>Eukaryota</taxon>
        <taxon>Viridiplantae</taxon>
        <taxon>Streptophyta</taxon>
        <taxon>Embryophyta</taxon>
        <taxon>Tracheophyta</taxon>
        <taxon>Spermatophyta</taxon>
        <taxon>Magnoliopsida</taxon>
        <taxon>Magnoliidae</taxon>
        <taxon>Laurales</taxon>
        <taxon>Calycanthaceae</taxon>
        <taxon>Calycanthus</taxon>
    </lineage>
</organism>
<accession>P60132</accession>
<accession>P29301</accession>
<reference key="1">
    <citation type="journal article" date="2000" name="Am. J. Bot.">
        <title>Utility of 17 chloroplast genes for inferring the phylogeny of the basal angiosperms.</title>
        <authorList>
            <person name="Graham S.W."/>
            <person name="Olmstead R.G."/>
        </authorList>
    </citation>
    <scope>NUCLEOTIDE SEQUENCE [GENOMIC DNA]</scope>
</reference>
<gene>
    <name evidence="2" type="primary">psbL</name>
</gene>
<sequence length="38" mass="4470">MTQSNPNEQSVELNRTSLYWGLLLIFVLAVLFSNYFFN</sequence>
<evidence type="ECO:0000250" key="1"/>
<evidence type="ECO:0000255" key="2">
    <source>
        <dbReference type="HAMAP-Rule" id="MF_01317"/>
    </source>
</evidence>
<comment type="function">
    <text evidence="2">One of the components of the core complex of photosystem II (PSII). PSII is a light-driven water:plastoquinone oxidoreductase that uses light energy to abstract electrons from H(2)O, generating O(2) and a proton gradient subsequently used for ATP formation. It consists of a core antenna complex that captures photons, and an electron transfer chain that converts photonic excitation into a charge separation. This subunit is found at the monomer-monomer interface and is required for correct PSII assembly and/or dimerization.</text>
</comment>
<comment type="subunit">
    <text evidence="2">PSII is composed of 1 copy each of membrane proteins PsbA, PsbB, PsbC, PsbD, PsbE, PsbF, PsbH, PsbI, PsbJ, PsbK, PsbL, PsbM, PsbT, PsbX, PsbY, PsbZ, Psb30/Ycf12, at least 3 peripheral proteins of the oxygen-evolving complex and a large number of cofactors. It forms dimeric complexes.</text>
</comment>
<comment type="subcellular location">
    <subcellularLocation>
        <location evidence="2">Plastid</location>
        <location evidence="2">Chloroplast thylakoid membrane</location>
        <topology evidence="2">Single-pass membrane protein</topology>
    </subcellularLocation>
</comment>
<comment type="RNA editing">
    <location>
        <position position="1" evidence="1"/>
    </location>
    <text evidence="1">The initiator methionine is created by RNA editing.</text>
</comment>
<comment type="similarity">
    <text evidence="2">Belongs to the PsbL family.</text>
</comment>
<protein>
    <recommendedName>
        <fullName evidence="2">Photosystem II reaction center protein L</fullName>
        <shortName evidence="2">PSII-L</shortName>
    </recommendedName>
</protein>
<dbReference type="EMBL" id="AF123831">
    <property type="protein sequence ID" value="AAG26204.1"/>
    <property type="molecule type" value="Genomic_DNA"/>
</dbReference>
<dbReference type="SMR" id="P60132"/>
<dbReference type="GO" id="GO:0009535">
    <property type="term" value="C:chloroplast thylakoid membrane"/>
    <property type="evidence" value="ECO:0007669"/>
    <property type="project" value="UniProtKB-SubCell"/>
</dbReference>
<dbReference type="GO" id="GO:0009539">
    <property type="term" value="C:photosystem II reaction center"/>
    <property type="evidence" value="ECO:0007669"/>
    <property type="project" value="InterPro"/>
</dbReference>
<dbReference type="GO" id="GO:0015979">
    <property type="term" value="P:photosynthesis"/>
    <property type="evidence" value="ECO:0007669"/>
    <property type="project" value="UniProtKB-UniRule"/>
</dbReference>
<dbReference type="HAMAP" id="MF_01317">
    <property type="entry name" value="PSII_PsbL"/>
    <property type="match status" value="1"/>
</dbReference>
<dbReference type="InterPro" id="IPR003372">
    <property type="entry name" value="PSII_PsbL"/>
</dbReference>
<dbReference type="InterPro" id="IPR037266">
    <property type="entry name" value="PSII_PsbL_sf"/>
</dbReference>
<dbReference type="NCBIfam" id="NF001972">
    <property type="entry name" value="PRK00753.1"/>
    <property type="match status" value="1"/>
</dbReference>
<dbReference type="Pfam" id="PF02419">
    <property type="entry name" value="PsbL"/>
    <property type="match status" value="1"/>
</dbReference>
<dbReference type="SUPFAM" id="SSF161017">
    <property type="entry name" value="Photosystem II reaction center protein L, PsbL"/>
    <property type="match status" value="1"/>
</dbReference>
<name>PSBL_CALFL</name>
<geneLocation type="chloroplast"/>